<keyword id="KW-0521">NADP</keyword>
<keyword id="KW-0560">Oxidoreductase</keyword>
<keyword id="KW-0627">Porphyrin biosynthesis</keyword>
<protein>
    <recommendedName>
        <fullName evidence="1">Glutamyl-tRNA reductase</fullName>
        <shortName evidence="1">GluTR</shortName>
        <ecNumber evidence="1">1.2.1.70</ecNumber>
    </recommendedName>
</protein>
<name>HEM1_PSEF5</name>
<evidence type="ECO:0000255" key="1">
    <source>
        <dbReference type="HAMAP-Rule" id="MF_00087"/>
    </source>
</evidence>
<feature type="chain" id="PRO_1000004672" description="Glutamyl-tRNA reductase">
    <location>
        <begin position="1"/>
        <end position="424"/>
    </location>
</feature>
<feature type="active site" description="Nucleophile" evidence="1">
    <location>
        <position position="50"/>
    </location>
</feature>
<feature type="binding site" evidence="1">
    <location>
        <begin position="49"/>
        <end position="52"/>
    </location>
    <ligand>
        <name>substrate</name>
    </ligand>
</feature>
<feature type="binding site" evidence="1">
    <location>
        <position position="107"/>
    </location>
    <ligand>
        <name>substrate</name>
    </ligand>
</feature>
<feature type="binding site" evidence="1">
    <location>
        <begin position="112"/>
        <end position="114"/>
    </location>
    <ligand>
        <name>substrate</name>
    </ligand>
</feature>
<feature type="binding site" evidence="1">
    <location>
        <position position="118"/>
    </location>
    <ligand>
        <name>substrate</name>
    </ligand>
</feature>
<feature type="binding site" evidence="1">
    <location>
        <begin position="187"/>
        <end position="192"/>
    </location>
    <ligand>
        <name>NADP(+)</name>
        <dbReference type="ChEBI" id="CHEBI:58349"/>
    </ligand>
</feature>
<feature type="site" description="Important for activity" evidence="1">
    <location>
        <position position="97"/>
    </location>
</feature>
<comment type="function">
    <text evidence="1">Catalyzes the NADPH-dependent reduction of glutamyl-tRNA(Glu) to glutamate 1-semialdehyde (GSA).</text>
</comment>
<comment type="catalytic activity">
    <reaction evidence="1">
        <text>(S)-4-amino-5-oxopentanoate + tRNA(Glu) + NADP(+) = L-glutamyl-tRNA(Glu) + NADPH + H(+)</text>
        <dbReference type="Rhea" id="RHEA:12344"/>
        <dbReference type="Rhea" id="RHEA-COMP:9663"/>
        <dbReference type="Rhea" id="RHEA-COMP:9680"/>
        <dbReference type="ChEBI" id="CHEBI:15378"/>
        <dbReference type="ChEBI" id="CHEBI:57501"/>
        <dbReference type="ChEBI" id="CHEBI:57783"/>
        <dbReference type="ChEBI" id="CHEBI:58349"/>
        <dbReference type="ChEBI" id="CHEBI:78442"/>
        <dbReference type="ChEBI" id="CHEBI:78520"/>
        <dbReference type="EC" id="1.2.1.70"/>
    </reaction>
</comment>
<comment type="pathway">
    <text evidence="1">Porphyrin-containing compound metabolism; protoporphyrin-IX biosynthesis; 5-aminolevulinate from L-glutamyl-tRNA(Glu): step 1/2.</text>
</comment>
<comment type="subunit">
    <text evidence="1">Homodimer.</text>
</comment>
<comment type="domain">
    <text evidence="1">Possesses an unusual extended V-shaped dimeric structure with each monomer consisting of three distinct domains arranged along a curved 'spinal' alpha-helix. The N-terminal catalytic domain specifically recognizes the glutamate moiety of the substrate. The second domain is the NADPH-binding domain, and the third C-terminal domain is responsible for dimerization.</text>
</comment>
<comment type="miscellaneous">
    <text evidence="1">During catalysis, the active site Cys acts as a nucleophile attacking the alpha-carbonyl group of tRNA-bound glutamate with the formation of a thioester intermediate between enzyme and glutamate, and the concomitant release of tRNA(Glu). The thioester intermediate is finally reduced by direct hydride transfer from NADPH, to form the product GSA.</text>
</comment>
<comment type="similarity">
    <text evidence="1">Belongs to the glutamyl-tRNA reductase family.</text>
</comment>
<gene>
    <name evidence="1" type="primary">hemA</name>
    <name type="ordered locus">PFL_5160</name>
</gene>
<proteinExistence type="inferred from homology"/>
<sequence>MAFLALGINHKTASVDVRERVAFTPEQLVEALQQLCRLTDSREAAILSTCNRSELYIEQDHLSADVVLRWLAEYHHLSLDELRASAYVHEDDAAVRHMMRVASGLDSLVLGEPQILGQMKSAYAVAREAGTVGPLLGRLFQATFSAAKQVRTDTAIGENPVSVAFAAVSLAKQIFSDLQRSQALLIGAGETITLVARHLHDLGVKRIVVANRTLERASLLAEQFGAHAVLLSDIPQELVHSDIVISSTASQLPILGKGAVESALKLRKHKPIFMVDIAVPRDIEPEVGELDDVYLYTVDDLHEVVAENLKSRQGAAQAAEELVNIGAEDFMVRLRELAAVDVLKAYRQQSERLRDEELQKALRMLANGSGAEDVLAQLARGLTNKLLHAPSVQLKKLSAEGRLDALAMAQELFALGEGSSDKTP</sequence>
<accession>Q4K694</accession>
<dbReference type="EC" id="1.2.1.70" evidence="1"/>
<dbReference type="EMBL" id="CP000076">
    <property type="protein sequence ID" value="AAY94382.1"/>
    <property type="molecule type" value="Genomic_DNA"/>
</dbReference>
<dbReference type="RefSeq" id="WP_011063407.1">
    <property type="nucleotide sequence ID" value="NC_004129.6"/>
</dbReference>
<dbReference type="SMR" id="Q4K694"/>
<dbReference type="STRING" id="220664.PFL_5160"/>
<dbReference type="GeneID" id="57478117"/>
<dbReference type="KEGG" id="pfl:PFL_5160"/>
<dbReference type="PATRIC" id="fig|220664.5.peg.5273"/>
<dbReference type="eggNOG" id="COG0373">
    <property type="taxonomic scope" value="Bacteria"/>
</dbReference>
<dbReference type="HOGENOM" id="CLU_035113_2_2_6"/>
<dbReference type="UniPathway" id="UPA00251">
    <property type="reaction ID" value="UER00316"/>
</dbReference>
<dbReference type="Proteomes" id="UP000008540">
    <property type="component" value="Chromosome"/>
</dbReference>
<dbReference type="GO" id="GO:0008883">
    <property type="term" value="F:glutamyl-tRNA reductase activity"/>
    <property type="evidence" value="ECO:0007669"/>
    <property type="project" value="UniProtKB-UniRule"/>
</dbReference>
<dbReference type="GO" id="GO:0050661">
    <property type="term" value="F:NADP binding"/>
    <property type="evidence" value="ECO:0007669"/>
    <property type="project" value="InterPro"/>
</dbReference>
<dbReference type="GO" id="GO:0019353">
    <property type="term" value="P:protoporphyrinogen IX biosynthetic process from glutamate"/>
    <property type="evidence" value="ECO:0007669"/>
    <property type="project" value="TreeGrafter"/>
</dbReference>
<dbReference type="CDD" id="cd05213">
    <property type="entry name" value="NAD_bind_Glutamyl_tRNA_reduct"/>
    <property type="match status" value="1"/>
</dbReference>
<dbReference type="FunFam" id="3.30.460.30:FF:000001">
    <property type="entry name" value="Glutamyl-tRNA reductase"/>
    <property type="match status" value="1"/>
</dbReference>
<dbReference type="FunFam" id="3.40.50.720:FF:000031">
    <property type="entry name" value="Glutamyl-tRNA reductase"/>
    <property type="match status" value="1"/>
</dbReference>
<dbReference type="Gene3D" id="3.30.460.30">
    <property type="entry name" value="Glutamyl-tRNA reductase, N-terminal domain"/>
    <property type="match status" value="1"/>
</dbReference>
<dbReference type="Gene3D" id="3.40.50.720">
    <property type="entry name" value="NAD(P)-binding Rossmann-like Domain"/>
    <property type="match status" value="1"/>
</dbReference>
<dbReference type="HAMAP" id="MF_00087">
    <property type="entry name" value="Glu_tRNA_reductase"/>
    <property type="match status" value="1"/>
</dbReference>
<dbReference type="InterPro" id="IPR000343">
    <property type="entry name" value="4pyrrol_synth_GluRdtase"/>
</dbReference>
<dbReference type="InterPro" id="IPR015896">
    <property type="entry name" value="4pyrrol_synth_GluRdtase_dimer"/>
</dbReference>
<dbReference type="InterPro" id="IPR015895">
    <property type="entry name" value="4pyrrol_synth_GluRdtase_N"/>
</dbReference>
<dbReference type="InterPro" id="IPR018214">
    <property type="entry name" value="GluRdtase_CS"/>
</dbReference>
<dbReference type="InterPro" id="IPR036453">
    <property type="entry name" value="GluRdtase_dimer_dom_sf"/>
</dbReference>
<dbReference type="InterPro" id="IPR036343">
    <property type="entry name" value="GluRdtase_N_sf"/>
</dbReference>
<dbReference type="InterPro" id="IPR036291">
    <property type="entry name" value="NAD(P)-bd_dom_sf"/>
</dbReference>
<dbReference type="InterPro" id="IPR006151">
    <property type="entry name" value="Shikm_DH/Glu-tRNA_Rdtase"/>
</dbReference>
<dbReference type="NCBIfam" id="TIGR01035">
    <property type="entry name" value="hemA"/>
    <property type="match status" value="1"/>
</dbReference>
<dbReference type="PANTHER" id="PTHR43013">
    <property type="entry name" value="GLUTAMYL-TRNA REDUCTASE"/>
    <property type="match status" value="1"/>
</dbReference>
<dbReference type="PANTHER" id="PTHR43013:SF1">
    <property type="entry name" value="GLUTAMYL-TRNA REDUCTASE"/>
    <property type="match status" value="1"/>
</dbReference>
<dbReference type="Pfam" id="PF00745">
    <property type="entry name" value="GlutR_dimer"/>
    <property type="match status" value="1"/>
</dbReference>
<dbReference type="Pfam" id="PF05201">
    <property type="entry name" value="GlutR_N"/>
    <property type="match status" value="1"/>
</dbReference>
<dbReference type="Pfam" id="PF01488">
    <property type="entry name" value="Shikimate_DH"/>
    <property type="match status" value="1"/>
</dbReference>
<dbReference type="PIRSF" id="PIRSF000445">
    <property type="entry name" value="4pyrrol_synth_GluRdtase"/>
    <property type="match status" value="1"/>
</dbReference>
<dbReference type="SUPFAM" id="SSF69742">
    <property type="entry name" value="Glutamyl tRNA-reductase catalytic, N-terminal domain"/>
    <property type="match status" value="1"/>
</dbReference>
<dbReference type="SUPFAM" id="SSF69075">
    <property type="entry name" value="Glutamyl tRNA-reductase dimerization domain"/>
    <property type="match status" value="1"/>
</dbReference>
<dbReference type="SUPFAM" id="SSF51735">
    <property type="entry name" value="NAD(P)-binding Rossmann-fold domains"/>
    <property type="match status" value="1"/>
</dbReference>
<dbReference type="PROSITE" id="PS00747">
    <property type="entry name" value="GLUTR"/>
    <property type="match status" value="1"/>
</dbReference>
<organism>
    <name type="scientific">Pseudomonas fluorescens (strain ATCC BAA-477 / NRRL B-23932 / Pf-5)</name>
    <dbReference type="NCBI Taxonomy" id="220664"/>
    <lineage>
        <taxon>Bacteria</taxon>
        <taxon>Pseudomonadati</taxon>
        <taxon>Pseudomonadota</taxon>
        <taxon>Gammaproteobacteria</taxon>
        <taxon>Pseudomonadales</taxon>
        <taxon>Pseudomonadaceae</taxon>
        <taxon>Pseudomonas</taxon>
    </lineage>
</organism>
<reference key="1">
    <citation type="journal article" date="2005" name="Nat. Biotechnol.">
        <title>Complete genome sequence of the plant commensal Pseudomonas fluorescens Pf-5.</title>
        <authorList>
            <person name="Paulsen I.T."/>
            <person name="Press C.M."/>
            <person name="Ravel J."/>
            <person name="Kobayashi D.Y."/>
            <person name="Myers G.S.A."/>
            <person name="Mavrodi D.V."/>
            <person name="DeBoy R.T."/>
            <person name="Seshadri R."/>
            <person name="Ren Q."/>
            <person name="Madupu R."/>
            <person name="Dodson R.J."/>
            <person name="Durkin A.S."/>
            <person name="Brinkac L.M."/>
            <person name="Daugherty S.C."/>
            <person name="Sullivan S.A."/>
            <person name="Rosovitz M.J."/>
            <person name="Gwinn M.L."/>
            <person name="Zhou L."/>
            <person name="Schneider D.J."/>
            <person name="Cartinhour S.W."/>
            <person name="Nelson W.C."/>
            <person name="Weidman J."/>
            <person name="Watkins K."/>
            <person name="Tran K."/>
            <person name="Khouri H."/>
            <person name="Pierson E.A."/>
            <person name="Pierson L.S. III"/>
            <person name="Thomashow L.S."/>
            <person name="Loper J.E."/>
        </authorList>
    </citation>
    <scope>NUCLEOTIDE SEQUENCE [LARGE SCALE GENOMIC DNA]</scope>
    <source>
        <strain>ATCC BAA-477 / NRRL B-23932 / Pf-5</strain>
    </source>
</reference>